<name>RS20_PROM0</name>
<comment type="function">
    <text evidence="1">Binds directly to 16S ribosomal RNA.</text>
</comment>
<comment type="similarity">
    <text evidence="1">Belongs to the bacterial ribosomal protein bS20 family.</text>
</comment>
<sequence>MANNKSAKKRIQIAERNRLINKSYKSTVRTLTKKTLENCEKYKKEPNDENKNLVTTSLNKAFSLIDKAVKKNVLHKNNGANRKSKINNFVKTTLTTK</sequence>
<accession>A3PEX6</accession>
<feature type="chain" id="PRO_1000014624" description="Small ribosomal subunit protein bS20">
    <location>
        <begin position="1"/>
        <end position="97"/>
    </location>
</feature>
<reference key="1">
    <citation type="journal article" date="2007" name="PLoS Genet.">
        <title>Patterns and implications of gene gain and loss in the evolution of Prochlorococcus.</title>
        <authorList>
            <person name="Kettler G.C."/>
            <person name="Martiny A.C."/>
            <person name="Huang K."/>
            <person name="Zucker J."/>
            <person name="Coleman M.L."/>
            <person name="Rodrigue S."/>
            <person name="Chen F."/>
            <person name="Lapidus A."/>
            <person name="Ferriera S."/>
            <person name="Johnson J."/>
            <person name="Steglich C."/>
            <person name="Church G.M."/>
            <person name="Richardson P."/>
            <person name="Chisholm S.W."/>
        </authorList>
    </citation>
    <scope>NUCLEOTIDE SEQUENCE [LARGE SCALE GENOMIC DNA]</scope>
    <source>
        <strain>MIT 9301</strain>
    </source>
</reference>
<gene>
    <name evidence="1" type="primary">rpsT</name>
    <name evidence="1" type="synonym">rps20</name>
    <name type="ordered locus">P9301_16781</name>
</gene>
<evidence type="ECO:0000255" key="1">
    <source>
        <dbReference type="HAMAP-Rule" id="MF_00500"/>
    </source>
</evidence>
<evidence type="ECO:0000305" key="2"/>
<organism>
    <name type="scientific">Prochlorococcus marinus (strain MIT 9301)</name>
    <dbReference type="NCBI Taxonomy" id="167546"/>
    <lineage>
        <taxon>Bacteria</taxon>
        <taxon>Bacillati</taxon>
        <taxon>Cyanobacteriota</taxon>
        <taxon>Cyanophyceae</taxon>
        <taxon>Synechococcales</taxon>
        <taxon>Prochlorococcaceae</taxon>
        <taxon>Prochlorococcus</taxon>
    </lineage>
</organism>
<protein>
    <recommendedName>
        <fullName evidence="1">Small ribosomal subunit protein bS20</fullName>
    </recommendedName>
    <alternativeName>
        <fullName evidence="2">30S ribosomal protein S20</fullName>
    </alternativeName>
</protein>
<proteinExistence type="inferred from homology"/>
<dbReference type="EMBL" id="CP000576">
    <property type="protein sequence ID" value="ABO18301.1"/>
    <property type="molecule type" value="Genomic_DNA"/>
</dbReference>
<dbReference type="RefSeq" id="WP_011863598.1">
    <property type="nucleotide sequence ID" value="NC_009091.1"/>
</dbReference>
<dbReference type="SMR" id="A3PEX6"/>
<dbReference type="STRING" id="167546.P9301_16781"/>
<dbReference type="KEGG" id="pmg:P9301_16781"/>
<dbReference type="eggNOG" id="COG0268">
    <property type="taxonomic scope" value="Bacteria"/>
</dbReference>
<dbReference type="HOGENOM" id="CLU_160655_5_0_3"/>
<dbReference type="OrthoDB" id="9808392at2"/>
<dbReference type="Proteomes" id="UP000001430">
    <property type="component" value="Chromosome"/>
</dbReference>
<dbReference type="GO" id="GO:0015935">
    <property type="term" value="C:small ribosomal subunit"/>
    <property type="evidence" value="ECO:0007669"/>
    <property type="project" value="TreeGrafter"/>
</dbReference>
<dbReference type="GO" id="GO:0070181">
    <property type="term" value="F:small ribosomal subunit rRNA binding"/>
    <property type="evidence" value="ECO:0007669"/>
    <property type="project" value="TreeGrafter"/>
</dbReference>
<dbReference type="GO" id="GO:0003735">
    <property type="term" value="F:structural constituent of ribosome"/>
    <property type="evidence" value="ECO:0007669"/>
    <property type="project" value="InterPro"/>
</dbReference>
<dbReference type="GO" id="GO:0006412">
    <property type="term" value="P:translation"/>
    <property type="evidence" value="ECO:0007669"/>
    <property type="project" value="UniProtKB-UniRule"/>
</dbReference>
<dbReference type="Gene3D" id="1.20.58.110">
    <property type="entry name" value="Ribosomal protein S20"/>
    <property type="match status" value="1"/>
</dbReference>
<dbReference type="HAMAP" id="MF_00500">
    <property type="entry name" value="Ribosomal_bS20"/>
    <property type="match status" value="1"/>
</dbReference>
<dbReference type="InterPro" id="IPR002583">
    <property type="entry name" value="Ribosomal_bS20"/>
</dbReference>
<dbReference type="InterPro" id="IPR036510">
    <property type="entry name" value="Ribosomal_bS20_sf"/>
</dbReference>
<dbReference type="NCBIfam" id="TIGR00029">
    <property type="entry name" value="S20"/>
    <property type="match status" value="1"/>
</dbReference>
<dbReference type="PANTHER" id="PTHR33398">
    <property type="entry name" value="30S RIBOSOMAL PROTEIN S20"/>
    <property type="match status" value="1"/>
</dbReference>
<dbReference type="PANTHER" id="PTHR33398:SF1">
    <property type="entry name" value="SMALL RIBOSOMAL SUBUNIT PROTEIN BS20C"/>
    <property type="match status" value="1"/>
</dbReference>
<dbReference type="Pfam" id="PF01649">
    <property type="entry name" value="Ribosomal_S20p"/>
    <property type="match status" value="1"/>
</dbReference>
<dbReference type="SUPFAM" id="SSF46992">
    <property type="entry name" value="Ribosomal protein S20"/>
    <property type="match status" value="1"/>
</dbReference>
<keyword id="KW-1185">Reference proteome</keyword>
<keyword id="KW-0687">Ribonucleoprotein</keyword>
<keyword id="KW-0689">Ribosomal protein</keyword>
<keyword id="KW-0694">RNA-binding</keyword>
<keyword id="KW-0699">rRNA-binding</keyword>